<dbReference type="EMBL" id="CR380955">
    <property type="protein sequence ID" value="CAG60414.1"/>
    <property type="molecule type" value="Genomic_DNA"/>
</dbReference>
<dbReference type="RefSeq" id="XP_447477.1">
    <property type="nucleotide sequence ID" value="XM_447477.1"/>
</dbReference>
<dbReference type="SMR" id="Q6FQL7"/>
<dbReference type="FunCoup" id="Q6FQL7">
    <property type="interactions" value="943"/>
</dbReference>
<dbReference type="STRING" id="284593.Q6FQL7"/>
<dbReference type="EnsemblFungi" id="CAGL0I05214g-T">
    <property type="protein sequence ID" value="CAGL0I05214g-T-p1"/>
    <property type="gene ID" value="CAGL0I05214g"/>
</dbReference>
<dbReference type="GeneID" id="2889199"/>
<dbReference type="KEGG" id="cgr:2889199"/>
<dbReference type="CGD" id="CAL0130003">
    <property type="gene designation" value="CAP2"/>
</dbReference>
<dbReference type="VEuPathDB" id="FungiDB:CAGL0I05214g"/>
<dbReference type="eggNOG" id="KOG3174">
    <property type="taxonomic scope" value="Eukaryota"/>
</dbReference>
<dbReference type="HOGENOM" id="CLU_045864_1_1_1"/>
<dbReference type="InParanoid" id="Q6FQL7"/>
<dbReference type="OMA" id="WSNKYYP"/>
<dbReference type="Proteomes" id="UP000002428">
    <property type="component" value="Chromosome I"/>
</dbReference>
<dbReference type="GO" id="GO:0099079">
    <property type="term" value="C:actin body"/>
    <property type="evidence" value="ECO:0007669"/>
    <property type="project" value="EnsemblFungi"/>
</dbReference>
<dbReference type="GO" id="GO:0030479">
    <property type="term" value="C:actin cortical patch"/>
    <property type="evidence" value="ECO:0007669"/>
    <property type="project" value="UniProtKB-SubCell"/>
</dbReference>
<dbReference type="GO" id="GO:0008290">
    <property type="term" value="C:F-actin capping protein complex"/>
    <property type="evidence" value="ECO:0007669"/>
    <property type="project" value="EnsemblFungi"/>
</dbReference>
<dbReference type="GO" id="GO:0043332">
    <property type="term" value="C:mating projection tip"/>
    <property type="evidence" value="ECO:0007669"/>
    <property type="project" value="EnsemblFungi"/>
</dbReference>
<dbReference type="GO" id="GO:0031097">
    <property type="term" value="C:medial cortex"/>
    <property type="evidence" value="ECO:0007669"/>
    <property type="project" value="EnsemblFungi"/>
</dbReference>
<dbReference type="GO" id="GO:0005634">
    <property type="term" value="C:nucleus"/>
    <property type="evidence" value="ECO:0007669"/>
    <property type="project" value="EnsemblFungi"/>
</dbReference>
<dbReference type="GO" id="GO:0051015">
    <property type="term" value="F:actin filament binding"/>
    <property type="evidence" value="ECO:0007669"/>
    <property type="project" value="EnsemblFungi"/>
</dbReference>
<dbReference type="GO" id="GO:0044396">
    <property type="term" value="P:actin cortical patch organization"/>
    <property type="evidence" value="ECO:0007669"/>
    <property type="project" value="EnsemblFungi"/>
</dbReference>
<dbReference type="GO" id="GO:0051016">
    <property type="term" value="P:barbed-end actin filament capping"/>
    <property type="evidence" value="ECO:0007669"/>
    <property type="project" value="EnsemblFungi"/>
</dbReference>
<dbReference type="GO" id="GO:1904600">
    <property type="term" value="P:mating projection actin fusion focus assembly"/>
    <property type="evidence" value="ECO:0007669"/>
    <property type="project" value="EnsemblFungi"/>
</dbReference>
<dbReference type="GO" id="GO:1903475">
    <property type="term" value="P:mitotic actomyosin contractile ring assembly"/>
    <property type="evidence" value="ECO:0007669"/>
    <property type="project" value="EnsemblFungi"/>
</dbReference>
<dbReference type="GO" id="GO:1902404">
    <property type="term" value="P:mitotic actomyosin contractile ring contraction"/>
    <property type="evidence" value="ECO:0007669"/>
    <property type="project" value="EnsemblFungi"/>
</dbReference>
<dbReference type="FunFam" id="1.20.58.570:FF:000001">
    <property type="entry name" value="F-actin-capping protein subunit beta"/>
    <property type="match status" value="1"/>
</dbReference>
<dbReference type="Gene3D" id="1.20.58.570">
    <property type="match status" value="1"/>
</dbReference>
<dbReference type="Gene3D" id="3.90.1150.210">
    <property type="entry name" value="F-actin capping protein, beta subunit"/>
    <property type="match status" value="1"/>
</dbReference>
<dbReference type="InterPro" id="IPR037282">
    <property type="entry name" value="CapZ_alpha/beta"/>
</dbReference>
<dbReference type="InterPro" id="IPR042276">
    <property type="entry name" value="CapZ_alpha/beta_2"/>
</dbReference>
<dbReference type="InterPro" id="IPR001698">
    <property type="entry name" value="CAPZB"/>
</dbReference>
<dbReference type="InterPro" id="IPR043175">
    <property type="entry name" value="CAPZB_N"/>
</dbReference>
<dbReference type="InterPro" id="IPR019771">
    <property type="entry name" value="F-actin_capping_bsu_CS"/>
</dbReference>
<dbReference type="PANTHER" id="PTHR10619">
    <property type="entry name" value="F-ACTIN-CAPPING PROTEIN SUBUNIT BETA"/>
    <property type="match status" value="1"/>
</dbReference>
<dbReference type="PANTHER" id="PTHR10619:SF0">
    <property type="entry name" value="F-ACTIN-CAPPING PROTEIN SUBUNIT BETA ISOFORMS 1 AND 2"/>
    <property type="match status" value="1"/>
</dbReference>
<dbReference type="Pfam" id="PF01115">
    <property type="entry name" value="F_actin_cap_B"/>
    <property type="match status" value="1"/>
</dbReference>
<dbReference type="PRINTS" id="PR00192">
    <property type="entry name" value="FACTINCAPB"/>
</dbReference>
<dbReference type="SUPFAM" id="SSF90096">
    <property type="entry name" value="Subunits of heterodimeric actin filament capping protein Capz"/>
    <property type="match status" value="1"/>
</dbReference>
<dbReference type="PROSITE" id="PS00231">
    <property type="entry name" value="F_ACTIN_CAPPING_BETA"/>
    <property type="match status" value="1"/>
</dbReference>
<feature type="chain" id="PRO_0000256837" description="F-actin-capping protein subunit beta">
    <location>
        <begin position="1"/>
        <end position="270"/>
    </location>
</feature>
<feature type="region of interest" description="Disordered" evidence="4">
    <location>
        <begin position="245"/>
        <end position="270"/>
    </location>
</feature>
<feature type="compositionally biased region" description="Polar residues" evidence="4">
    <location>
        <begin position="245"/>
        <end position="258"/>
    </location>
</feature>
<proteinExistence type="inferred from homology"/>
<protein>
    <recommendedName>
        <fullName>F-actin-capping protein subunit beta</fullName>
    </recommendedName>
</protein>
<gene>
    <name type="primary">CAP2</name>
    <name type="ordered locus">CAGL0I05214g</name>
</gene>
<sequence length="270" mass="30953">MDEKYDAALDLLRRLNPNNLTENLQRIIGLEPELAEDLLSSIDVPLKVQQDSKQSGRPFLCCDYNRDVDSYRSPWSNEYFPELSAEDLQESPFPSESLRSLEVLANDSFDVYRDLYYEGGISSVYLWDLDEEGEFAGVVLFKKEGSNKESWDSIHVIEATKGNDDETFTYRLTSTIILALDNKQNDTSLAGNLTRQTEKEAKIDTSNTDISHITNLGTLIEDIESQLRTQLEIVYFEKTRDIFHQTRSQKSTTDSQEQQQKEVIKGLQNL</sequence>
<organism>
    <name type="scientific">Candida glabrata (strain ATCC 2001 / BCRC 20586 / JCM 3761 / NBRC 0622 / NRRL Y-65 / CBS 138)</name>
    <name type="common">Yeast</name>
    <name type="synonym">Nakaseomyces glabratus</name>
    <dbReference type="NCBI Taxonomy" id="284593"/>
    <lineage>
        <taxon>Eukaryota</taxon>
        <taxon>Fungi</taxon>
        <taxon>Dikarya</taxon>
        <taxon>Ascomycota</taxon>
        <taxon>Saccharomycotina</taxon>
        <taxon>Saccharomycetes</taxon>
        <taxon>Saccharomycetales</taxon>
        <taxon>Saccharomycetaceae</taxon>
        <taxon>Nakaseomyces</taxon>
    </lineage>
</organism>
<reference key="1">
    <citation type="journal article" date="2004" name="Nature">
        <title>Genome evolution in yeasts.</title>
        <authorList>
            <person name="Dujon B."/>
            <person name="Sherman D."/>
            <person name="Fischer G."/>
            <person name="Durrens P."/>
            <person name="Casaregola S."/>
            <person name="Lafontaine I."/>
            <person name="de Montigny J."/>
            <person name="Marck C."/>
            <person name="Neuveglise C."/>
            <person name="Talla E."/>
            <person name="Goffard N."/>
            <person name="Frangeul L."/>
            <person name="Aigle M."/>
            <person name="Anthouard V."/>
            <person name="Babour A."/>
            <person name="Barbe V."/>
            <person name="Barnay S."/>
            <person name="Blanchin S."/>
            <person name="Beckerich J.-M."/>
            <person name="Beyne E."/>
            <person name="Bleykasten C."/>
            <person name="Boisrame A."/>
            <person name="Boyer J."/>
            <person name="Cattolico L."/>
            <person name="Confanioleri F."/>
            <person name="de Daruvar A."/>
            <person name="Despons L."/>
            <person name="Fabre E."/>
            <person name="Fairhead C."/>
            <person name="Ferry-Dumazet H."/>
            <person name="Groppi A."/>
            <person name="Hantraye F."/>
            <person name="Hennequin C."/>
            <person name="Jauniaux N."/>
            <person name="Joyet P."/>
            <person name="Kachouri R."/>
            <person name="Kerrest A."/>
            <person name="Koszul R."/>
            <person name="Lemaire M."/>
            <person name="Lesur I."/>
            <person name="Ma L."/>
            <person name="Muller H."/>
            <person name="Nicaud J.-M."/>
            <person name="Nikolski M."/>
            <person name="Oztas S."/>
            <person name="Ozier-Kalogeropoulos O."/>
            <person name="Pellenz S."/>
            <person name="Potier S."/>
            <person name="Richard G.-F."/>
            <person name="Straub M.-L."/>
            <person name="Suleau A."/>
            <person name="Swennen D."/>
            <person name="Tekaia F."/>
            <person name="Wesolowski-Louvel M."/>
            <person name="Westhof E."/>
            <person name="Wirth B."/>
            <person name="Zeniou-Meyer M."/>
            <person name="Zivanovic Y."/>
            <person name="Bolotin-Fukuhara M."/>
            <person name="Thierry A."/>
            <person name="Bouchier C."/>
            <person name="Caudron B."/>
            <person name="Scarpelli C."/>
            <person name="Gaillardin C."/>
            <person name="Weissenbach J."/>
            <person name="Wincker P."/>
            <person name="Souciet J.-L."/>
        </authorList>
    </citation>
    <scope>NUCLEOTIDE SEQUENCE [LARGE SCALE GENOMIC DNA]</scope>
    <source>
        <strain>ATCC 2001 / BCRC 20586 / JCM 3761 / NBRC 0622 / NRRL Y-65 / CBS 138</strain>
    </source>
</reference>
<comment type="function">
    <text evidence="1">F-actin-capping proteins bind in a Ca(2+)-independent manner to the fast growing ends of actin filaments (barbed end) thereby blocking the exchange of subunits at these ends. Unlike other capping proteins (such as gelsolin and severin), these proteins do not sever actin filaments (By similarity).</text>
</comment>
<comment type="subunit">
    <text evidence="2">Component of the F-actin capping complex, composed of a heterodimer of an alpha and a beta subunit.</text>
</comment>
<comment type="subcellular location">
    <subcellularLocation>
        <location evidence="2">Cytoplasm</location>
        <location evidence="2">Cytoskeleton</location>
        <location evidence="2">Actin patch</location>
    </subcellularLocation>
    <subcellularLocation>
        <location evidence="3">Cytoplasm</location>
        <location evidence="3">Cytoskeleton</location>
    </subcellularLocation>
</comment>
<comment type="similarity">
    <text evidence="5">Belongs to the F-actin-capping protein beta subunit family.</text>
</comment>
<accession>Q6FQL7</accession>
<evidence type="ECO:0000250" key="1"/>
<evidence type="ECO:0000250" key="2">
    <source>
        <dbReference type="UniProtKB" id="P13517"/>
    </source>
</evidence>
<evidence type="ECO:0000250" key="3">
    <source>
        <dbReference type="UniProtKB" id="Q9HGP5"/>
    </source>
</evidence>
<evidence type="ECO:0000256" key="4">
    <source>
        <dbReference type="SAM" id="MobiDB-lite"/>
    </source>
</evidence>
<evidence type="ECO:0000305" key="5"/>
<name>CAPZB_CANGA</name>
<keyword id="KW-0117">Actin capping</keyword>
<keyword id="KW-0009">Actin-binding</keyword>
<keyword id="KW-0963">Cytoplasm</keyword>
<keyword id="KW-0206">Cytoskeleton</keyword>
<keyword id="KW-1185">Reference proteome</keyword>